<keyword id="KW-1185">Reference proteome</keyword>
<comment type="function">
    <text evidence="1">Probably involved in ribonucleotide reductase function.</text>
</comment>
<comment type="similarity">
    <text evidence="1">Belongs to the NrdI family.</text>
</comment>
<dbReference type="EMBL" id="CP000490">
    <property type="protein sequence ID" value="ABL72440.1"/>
    <property type="molecule type" value="Genomic_DNA"/>
</dbReference>
<dbReference type="RefSeq" id="WP_011750602.1">
    <property type="nucleotide sequence ID" value="NC_008687.1"/>
</dbReference>
<dbReference type="SMR" id="A1BA96"/>
<dbReference type="STRING" id="318586.Pden_4376"/>
<dbReference type="EnsemblBacteria" id="ABL72440">
    <property type="protein sequence ID" value="ABL72440"/>
    <property type="gene ID" value="Pden_4376"/>
</dbReference>
<dbReference type="GeneID" id="93454040"/>
<dbReference type="KEGG" id="pde:Pden_4376"/>
<dbReference type="eggNOG" id="COG1780">
    <property type="taxonomic scope" value="Bacteria"/>
</dbReference>
<dbReference type="HOGENOM" id="CLU_114845_0_0_5"/>
<dbReference type="OrthoDB" id="350535at2"/>
<dbReference type="Proteomes" id="UP000000361">
    <property type="component" value="Chromosome 2"/>
</dbReference>
<dbReference type="GO" id="GO:0010181">
    <property type="term" value="F:FMN binding"/>
    <property type="evidence" value="ECO:0007669"/>
    <property type="project" value="InterPro"/>
</dbReference>
<dbReference type="GO" id="GO:0036211">
    <property type="term" value="P:protein modification process"/>
    <property type="evidence" value="ECO:0007669"/>
    <property type="project" value="InterPro"/>
</dbReference>
<dbReference type="Gene3D" id="3.40.50.360">
    <property type="match status" value="1"/>
</dbReference>
<dbReference type="HAMAP" id="MF_00128">
    <property type="entry name" value="NrdI"/>
    <property type="match status" value="1"/>
</dbReference>
<dbReference type="InterPro" id="IPR029039">
    <property type="entry name" value="Flavoprotein-like_sf"/>
</dbReference>
<dbReference type="InterPro" id="IPR020852">
    <property type="entry name" value="RNR_Ib_NrdI_bac"/>
</dbReference>
<dbReference type="InterPro" id="IPR004465">
    <property type="entry name" value="RNR_NrdI"/>
</dbReference>
<dbReference type="NCBIfam" id="TIGR00333">
    <property type="entry name" value="nrdI"/>
    <property type="match status" value="1"/>
</dbReference>
<dbReference type="PANTHER" id="PTHR37297">
    <property type="entry name" value="PROTEIN NRDI"/>
    <property type="match status" value="1"/>
</dbReference>
<dbReference type="PANTHER" id="PTHR37297:SF1">
    <property type="entry name" value="PROTEIN NRDI"/>
    <property type="match status" value="1"/>
</dbReference>
<dbReference type="Pfam" id="PF07972">
    <property type="entry name" value="Flavodoxin_NdrI"/>
    <property type="match status" value="1"/>
</dbReference>
<dbReference type="PIRSF" id="PIRSF005087">
    <property type="entry name" value="NrdI"/>
    <property type="match status" value="1"/>
</dbReference>
<dbReference type="SUPFAM" id="SSF52218">
    <property type="entry name" value="Flavoproteins"/>
    <property type="match status" value="1"/>
</dbReference>
<reference key="1">
    <citation type="submission" date="2006-12" db="EMBL/GenBank/DDBJ databases">
        <title>Complete sequence of chromosome 2 of Paracoccus denitrificans PD1222.</title>
        <authorList>
            <person name="Copeland A."/>
            <person name="Lucas S."/>
            <person name="Lapidus A."/>
            <person name="Barry K."/>
            <person name="Detter J.C."/>
            <person name="Glavina del Rio T."/>
            <person name="Hammon N."/>
            <person name="Israni S."/>
            <person name="Dalin E."/>
            <person name="Tice H."/>
            <person name="Pitluck S."/>
            <person name="Munk A.C."/>
            <person name="Brettin T."/>
            <person name="Bruce D."/>
            <person name="Han C."/>
            <person name="Tapia R."/>
            <person name="Gilna P."/>
            <person name="Schmutz J."/>
            <person name="Larimer F."/>
            <person name="Land M."/>
            <person name="Hauser L."/>
            <person name="Kyrpides N."/>
            <person name="Lykidis A."/>
            <person name="Spiro S."/>
            <person name="Richardson D.J."/>
            <person name="Moir J.W.B."/>
            <person name="Ferguson S.J."/>
            <person name="van Spanning R.J.M."/>
            <person name="Richardson P."/>
        </authorList>
    </citation>
    <scope>NUCLEOTIDE SEQUENCE [LARGE SCALE GENOMIC DNA]</scope>
    <source>
        <strain>Pd 1222</strain>
    </source>
</reference>
<protein>
    <recommendedName>
        <fullName evidence="1">Protein NrdI</fullName>
    </recommendedName>
</protein>
<sequence length="138" mass="14821">MGGLVYFSSGSGNTARFVTRLGLPAGRIPISPRDEMPAPALPYVLICPTYADGMGRGAVPKQVIRFLNDPDRRALLRGVIATGNRNFGATYALAGRVISDKCNVPVLYRFELAGTDLDISRVQAGLAKFWGTECLTMA</sequence>
<proteinExistence type="inferred from homology"/>
<evidence type="ECO:0000255" key="1">
    <source>
        <dbReference type="HAMAP-Rule" id="MF_00128"/>
    </source>
</evidence>
<organism>
    <name type="scientific">Paracoccus denitrificans (strain Pd 1222)</name>
    <dbReference type="NCBI Taxonomy" id="318586"/>
    <lineage>
        <taxon>Bacteria</taxon>
        <taxon>Pseudomonadati</taxon>
        <taxon>Pseudomonadota</taxon>
        <taxon>Alphaproteobacteria</taxon>
        <taxon>Rhodobacterales</taxon>
        <taxon>Paracoccaceae</taxon>
        <taxon>Paracoccus</taxon>
    </lineage>
</organism>
<accession>A1BA96</accession>
<name>NRDI_PARDP</name>
<gene>
    <name evidence="1" type="primary">nrdI</name>
    <name type="ordered locus">Pden_4376</name>
</gene>
<feature type="chain" id="PRO_1000016517" description="Protein NrdI">
    <location>
        <begin position="1"/>
        <end position="138"/>
    </location>
</feature>